<comment type="function">
    <text evidence="1">Produces ATP from ADP in the presence of a proton gradient across the membrane. The catalytic sites are hosted primarily by the beta subunits.</text>
</comment>
<comment type="catalytic activity">
    <reaction evidence="1">
        <text>ATP + H2O + 4 H(+)(in) = ADP + phosphate + 5 H(+)(out)</text>
        <dbReference type="Rhea" id="RHEA:57720"/>
        <dbReference type="ChEBI" id="CHEBI:15377"/>
        <dbReference type="ChEBI" id="CHEBI:15378"/>
        <dbReference type="ChEBI" id="CHEBI:30616"/>
        <dbReference type="ChEBI" id="CHEBI:43474"/>
        <dbReference type="ChEBI" id="CHEBI:456216"/>
        <dbReference type="EC" id="7.1.2.2"/>
    </reaction>
</comment>
<comment type="subunit">
    <text evidence="1">F-type ATPases have 2 components, CF(1) - the catalytic core - and CF(0) - the membrane proton channel. CF(1) has five subunits: alpha(3), beta(3), gamma(1), delta(1), epsilon(1). CF(0) has three main subunits: a(1), b(2) and c(9-12). The alpha and beta chains form an alternating ring which encloses part of the gamma chain. CF(1) is attached to CF(0) by a central stalk formed by the gamma and epsilon chains, while a peripheral stalk is formed by the delta and b chains.</text>
</comment>
<comment type="subcellular location">
    <subcellularLocation>
        <location evidence="1">Cell inner membrane</location>
        <topology evidence="1">Peripheral membrane protein</topology>
    </subcellularLocation>
</comment>
<comment type="similarity">
    <text evidence="1">Belongs to the ATPase alpha/beta chains family.</text>
</comment>
<gene>
    <name evidence="1" type="primary">atpD</name>
    <name type="ordered locus">Tlet_0166</name>
</gene>
<accession>A8F3K2</accession>
<dbReference type="EC" id="7.1.2.2" evidence="1"/>
<dbReference type="EMBL" id="CP000812">
    <property type="protein sequence ID" value="ABV32736.1"/>
    <property type="molecule type" value="Genomic_DNA"/>
</dbReference>
<dbReference type="SMR" id="A8F3K2"/>
<dbReference type="STRING" id="416591.Tlet_0166"/>
<dbReference type="KEGG" id="tle:Tlet_0166"/>
<dbReference type="eggNOG" id="COG0055">
    <property type="taxonomic scope" value="Bacteria"/>
</dbReference>
<dbReference type="HOGENOM" id="CLU_022398_0_2_0"/>
<dbReference type="Proteomes" id="UP000002016">
    <property type="component" value="Chromosome"/>
</dbReference>
<dbReference type="GO" id="GO:0005886">
    <property type="term" value="C:plasma membrane"/>
    <property type="evidence" value="ECO:0007669"/>
    <property type="project" value="UniProtKB-SubCell"/>
</dbReference>
<dbReference type="GO" id="GO:0045259">
    <property type="term" value="C:proton-transporting ATP synthase complex"/>
    <property type="evidence" value="ECO:0007669"/>
    <property type="project" value="UniProtKB-KW"/>
</dbReference>
<dbReference type="GO" id="GO:0005524">
    <property type="term" value="F:ATP binding"/>
    <property type="evidence" value="ECO:0007669"/>
    <property type="project" value="UniProtKB-UniRule"/>
</dbReference>
<dbReference type="GO" id="GO:0016887">
    <property type="term" value="F:ATP hydrolysis activity"/>
    <property type="evidence" value="ECO:0007669"/>
    <property type="project" value="InterPro"/>
</dbReference>
<dbReference type="GO" id="GO:0046933">
    <property type="term" value="F:proton-transporting ATP synthase activity, rotational mechanism"/>
    <property type="evidence" value="ECO:0007669"/>
    <property type="project" value="UniProtKB-UniRule"/>
</dbReference>
<dbReference type="CDD" id="cd18110">
    <property type="entry name" value="ATP-synt_F1_beta_C"/>
    <property type="match status" value="1"/>
</dbReference>
<dbReference type="CDD" id="cd18115">
    <property type="entry name" value="ATP-synt_F1_beta_N"/>
    <property type="match status" value="1"/>
</dbReference>
<dbReference type="CDD" id="cd01133">
    <property type="entry name" value="F1-ATPase_beta_CD"/>
    <property type="match status" value="1"/>
</dbReference>
<dbReference type="FunFam" id="1.10.1140.10:FF:000001">
    <property type="entry name" value="ATP synthase subunit beta"/>
    <property type="match status" value="1"/>
</dbReference>
<dbReference type="FunFam" id="2.40.10.170:FF:000005">
    <property type="entry name" value="ATP synthase subunit beta"/>
    <property type="match status" value="1"/>
</dbReference>
<dbReference type="FunFam" id="3.40.50.300:FF:000026">
    <property type="entry name" value="ATP synthase subunit beta"/>
    <property type="match status" value="1"/>
</dbReference>
<dbReference type="Gene3D" id="2.40.10.170">
    <property type="match status" value="1"/>
</dbReference>
<dbReference type="Gene3D" id="1.10.1140.10">
    <property type="entry name" value="Bovine Mitochondrial F1-atpase, Atp Synthase Beta Chain, Chain D, domain 3"/>
    <property type="match status" value="1"/>
</dbReference>
<dbReference type="Gene3D" id="3.40.50.300">
    <property type="entry name" value="P-loop containing nucleotide triphosphate hydrolases"/>
    <property type="match status" value="1"/>
</dbReference>
<dbReference type="HAMAP" id="MF_01347">
    <property type="entry name" value="ATP_synth_beta_bact"/>
    <property type="match status" value="1"/>
</dbReference>
<dbReference type="InterPro" id="IPR003593">
    <property type="entry name" value="AAA+_ATPase"/>
</dbReference>
<dbReference type="InterPro" id="IPR055190">
    <property type="entry name" value="ATP-synt_VA_C"/>
</dbReference>
<dbReference type="InterPro" id="IPR005722">
    <property type="entry name" value="ATP_synth_F1_bsu"/>
</dbReference>
<dbReference type="InterPro" id="IPR020003">
    <property type="entry name" value="ATPase_a/bsu_AS"/>
</dbReference>
<dbReference type="InterPro" id="IPR050053">
    <property type="entry name" value="ATPase_alpha/beta_chains"/>
</dbReference>
<dbReference type="InterPro" id="IPR004100">
    <property type="entry name" value="ATPase_F1/V1/A1_a/bsu_N"/>
</dbReference>
<dbReference type="InterPro" id="IPR036121">
    <property type="entry name" value="ATPase_F1/V1/A1_a/bsu_N_sf"/>
</dbReference>
<dbReference type="InterPro" id="IPR000194">
    <property type="entry name" value="ATPase_F1/V1/A1_a/bsu_nucl-bd"/>
</dbReference>
<dbReference type="InterPro" id="IPR024034">
    <property type="entry name" value="ATPase_F1/V1_b/a_C"/>
</dbReference>
<dbReference type="InterPro" id="IPR027417">
    <property type="entry name" value="P-loop_NTPase"/>
</dbReference>
<dbReference type="NCBIfam" id="TIGR01039">
    <property type="entry name" value="atpD"/>
    <property type="match status" value="1"/>
</dbReference>
<dbReference type="PANTHER" id="PTHR15184">
    <property type="entry name" value="ATP SYNTHASE"/>
    <property type="match status" value="1"/>
</dbReference>
<dbReference type="PANTHER" id="PTHR15184:SF71">
    <property type="entry name" value="ATP SYNTHASE SUBUNIT BETA, MITOCHONDRIAL"/>
    <property type="match status" value="1"/>
</dbReference>
<dbReference type="Pfam" id="PF00006">
    <property type="entry name" value="ATP-synt_ab"/>
    <property type="match status" value="1"/>
</dbReference>
<dbReference type="Pfam" id="PF02874">
    <property type="entry name" value="ATP-synt_ab_N"/>
    <property type="match status" value="1"/>
</dbReference>
<dbReference type="Pfam" id="PF22919">
    <property type="entry name" value="ATP-synt_VA_C"/>
    <property type="match status" value="1"/>
</dbReference>
<dbReference type="SMART" id="SM00382">
    <property type="entry name" value="AAA"/>
    <property type="match status" value="1"/>
</dbReference>
<dbReference type="SUPFAM" id="SSF47917">
    <property type="entry name" value="C-terminal domain of alpha and beta subunits of F1 ATP synthase"/>
    <property type="match status" value="1"/>
</dbReference>
<dbReference type="SUPFAM" id="SSF50615">
    <property type="entry name" value="N-terminal domain of alpha and beta subunits of F1 ATP synthase"/>
    <property type="match status" value="1"/>
</dbReference>
<dbReference type="SUPFAM" id="SSF52540">
    <property type="entry name" value="P-loop containing nucleoside triphosphate hydrolases"/>
    <property type="match status" value="1"/>
</dbReference>
<dbReference type="PROSITE" id="PS00152">
    <property type="entry name" value="ATPASE_ALPHA_BETA"/>
    <property type="match status" value="1"/>
</dbReference>
<feature type="chain" id="PRO_0000339597" description="ATP synthase subunit beta">
    <location>
        <begin position="1"/>
        <end position="469"/>
    </location>
</feature>
<feature type="binding site" evidence="1">
    <location>
        <begin position="153"/>
        <end position="160"/>
    </location>
    <ligand>
        <name>ATP</name>
        <dbReference type="ChEBI" id="CHEBI:30616"/>
    </ligand>
</feature>
<protein>
    <recommendedName>
        <fullName evidence="1">ATP synthase subunit beta</fullName>
        <ecNumber evidence="1">7.1.2.2</ecNumber>
    </recommendedName>
    <alternativeName>
        <fullName evidence="1">ATP synthase F1 sector subunit beta</fullName>
    </alternativeName>
    <alternativeName>
        <fullName evidence="1">F-ATPase subunit beta</fullName>
    </alternativeName>
</protein>
<proteinExistence type="inferred from homology"/>
<name>ATPB_PSELT</name>
<evidence type="ECO:0000255" key="1">
    <source>
        <dbReference type="HAMAP-Rule" id="MF_01347"/>
    </source>
</evidence>
<sequence length="469" mass="51273">MAGKGYIVRIIGPVVDVKFDEKELPDIYNALEVTNPQNGEKLILEVEQLIGDNTVRAVALDSTDGLTRGLEVVDTGKPIVAPVGKGVLGRILNVVGKPIDEKGDIQAEDYWPIHRPAPKITEQKTEIEVLETGIKVIDLLAPFPKGGKIGFFGGAGVGKTVLVMELIRNIAIEQKGFSVFAGVGERTREGNDLWLEMQEAGVLENTVLVFGQMNEPPGARFRVGLTALTIAEYFRDVEGRDVLLFIDNIFRFVQAGSEVSALLGRMPSAVGYQPTLATDMGELQERITSTQKGSITSVQAIYVPADDITDPAPATTFSHLDASVVLSRKIAELGIYPAVDPLDSTSKILDPAVIGWEHYQVARGVQEVLQRYKDLQDIIAILGMEELTEEDKLIVQRARKIQRFLSQPFFVAERFTGANGKYVPISETVKGFKEILEGKHDSLPEQAFFMVGTIDEAVQKAERLKGSAA</sequence>
<reference key="1">
    <citation type="submission" date="2007-08" db="EMBL/GenBank/DDBJ databases">
        <title>Complete sequence of Thermotoga lettingae TMO.</title>
        <authorList>
            <consortium name="US DOE Joint Genome Institute"/>
            <person name="Copeland A."/>
            <person name="Lucas S."/>
            <person name="Lapidus A."/>
            <person name="Barry K."/>
            <person name="Glavina del Rio T."/>
            <person name="Dalin E."/>
            <person name="Tice H."/>
            <person name="Pitluck S."/>
            <person name="Foster B."/>
            <person name="Bruce D."/>
            <person name="Schmutz J."/>
            <person name="Larimer F."/>
            <person name="Land M."/>
            <person name="Hauser L."/>
            <person name="Kyrpides N."/>
            <person name="Mikhailova N."/>
            <person name="Nelson K."/>
            <person name="Gogarten J.P."/>
            <person name="Noll K."/>
            <person name="Richardson P."/>
        </authorList>
    </citation>
    <scope>NUCLEOTIDE SEQUENCE [LARGE SCALE GENOMIC DNA]</scope>
    <source>
        <strain>ATCC BAA-301 / DSM 14385 / NBRC 107922 / TMO</strain>
    </source>
</reference>
<keyword id="KW-0066">ATP synthesis</keyword>
<keyword id="KW-0067">ATP-binding</keyword>
<keyword id="KW-0997">Cell inner membrane</keyword>
<keyword id="KW-1003">Cell membrane</keyword>
<keyword id="KW-0139">CF(1)</keyword>
<keyword id="KW-0375">Hydrogen ion transport</keyword>
<keyword id="KW-0406">Ion transport</keyword>
<keyword id="KW-0472">Membrane</keyword>
<keyword id="KW-0547">Nucleotide-binding</keyword>
<keyword id="KW-1185">Reference proteome</keyword>
<keyword id="KW-1278">Translocase</keyword>
<keyword id="KW-0813">Transport</keyword>
<organism>
    <name type="scientific">Pseudothermotoga lettingae (strain ATCC BAA-301 / DSM 14385 / NBRC 107922 / TMO)</name>
    <name type="common">Thermotoga lettingae</name>
    <dbReference type="NCBI Taxonomy" id="416591"/>
    <lineage>
        <taxon>Bacteria</taxon>
        <taxon>Thermotogati</taxon>
        <taxon>Thermotogota</taxon>
        <taxon>Thermotogae</taxon>
        <taxon>Thermotogales</taxon>
        <taxon>Thermotogaceae</taxon>
        <taxon>Pseudothermotoga</taxon>
    </lineage>
</organism>